<sequence length="302" mass="33892">MKRPDYRTLQALDAVIRERGFERAAQKLCITQSAVSQRIKQLENLFGQPLLVRTVPPRPTEQGQKLLALLHQVELLEEEWLGNDNGVDTPLLLSLAVNADSLATWLLPALKPVLADLPIRLNLQVEDETRTQERLRRGEVVGAVSIQPQPLPSCLVDQLGALDYLFVASKAFAERYFPNGVTRSALLKAPAVAFDHLDDMHQAFLQQNFDLSPGSVPCHIVNSSEAFVQLARQGTTCCMIPHLQIEKELASGELIDLTPGLLQRRMLFWHRFAPESRTMRKVTDALLSYGRQVLRQDSFIGQ</sequence>
<accession>Q1CEY8</accession>
<accession>C4GXF6</accession>
<gene>
    <name evidence="1" type="primary">argP</name>
    <name type="synonym">iciA</name>
    <name type="ordered locus">YPN_3115</name>
    <name type="ORF">YP516_3536</name>
</gene>
<dbReference type="EMBL" id="CP000305">
    <property type="protein sequence ID" value="ABG19442.1"/>
    <property type="molecule type" value="Genomic_DNA"/>
</dbReference>
<dbReference type="EMBL" id="ACNQ01000017">
    <property type="protein sequence ID" value="EEO75606.1"/>
    <property type="molecule type" value="Genomic_DNA"/>
</dbReference>
<dbReference type="RefSeq" id="WP_002209958.1">
    <property type="nucleotide sequence ID" value="NZ_ACNQ01000017.1"/>
</dbReference>
<dbReference type="SMR" id="Q1CEY8"/>
<dbReference type="KEGG" id="ypn:YPN_3115"/>
<dbReference type="HOGENOM" id="CLU_063829_0_0_6"/>
<dbReference type="Proteomes" id="UP000008936">
    <property type="component" value="Chromosome"/>
</dbReference>
<dbReference type="GO" id="GO:0003677">
    <property type="term" value="F:DNA binding"/>
    <property type="evidence" value="ECO:0007669"/>
    <property type="project" value="UniProtKB-UniRule"/>
</dbReference>
<dbReference type="GO" id="GO:0003700">
    <property type="term" value="F:DNA-binding transcription factor activity"/>
    <property type="evidence" value="ECO:0007669"/>
    <property type="project" value="UniProtKB-UniRule"/>
</dbReference>
<dbReference type="CDD" id="cd08428">
    <property type="entry name" value="PBP2_IciA_ArgP"/>
    <property type="match status" value="1"/>
</dbReference>
<dbReference type="FunFam" id="1.10.10.10:FF:000061">
    <property type="entry name" value="HTH-type transcriptional regulator ArgP"/>
    <property type="match status" value="1"/>
</dbReference>
<dbReference type="FunFam" id="3.40.190.290:FF:000002">
    <property type="entry name" value="HTH-type transcriptional regulator ArgP"/>
    <property type="match status" value="1"/>
</dbReference>
<dbReference type="Gene3D" id="3.40.190.290">
    <property type="match status" value="1"/>
</dbReference>
<dbReference type="Gene3D" id="1.10.10.10">
    <property type="entry name" value="Winged helix-like DNA-binding domain superfamily/Winged helix DNA-binding domain"/>
    <property type="match status" value="1"/>
</dbReference>
<dbReference type="HAMAP" id="MF_00513">
    <property type="entry name" value="HTH_type_ArgP"/>
    <property type="match status" value="1"/>
</dbReference>
<dbReference type="InterPro" id="IPR017685">
    <property type="entry name" value="ArgP"/>
</dbReference>
<dbReference type="InterPro" id="IPR023490">
    <property type="entry name" value="ArgP_gammaproteobact"/>
</dbReference>
<dbReference type="InterPro" id="IPR050176">
    <property type="entry name" value="LTTR"/>
</dbReference>
<dbReference type="InterPro" id="IPR005119">
    <property type="entry name" value="LysR_subst-bd"/>
</dbReference>
<dbReference type="InterPro" id="IPR000847">
    <property type="entry name" value="Tscrpt_reg_HTH_LysR"/>
</dbReference>
<dbReference type="InterPro" id="IPR036388">
    <property type="entry name" value="WH-like_DNA-bd_sf"/>
</dbReference>
<dbReference type="InterPro" id="IPR036390">
    <property type="entry name" value="WH_DNA-bd_sf"/>
</dbReference>
<dbReference type="NCBIfam" id="TIGR03298">
    <property type="entry name" value="argP"/>
    <property type="match status" value="1"/>
</dbReference>
<dbReference type="NCBIfam" id="NF002964">
    <property type="entry name" value="PRK03635.1"/>
    <property type="match status" value="1"/>
</dbReference>
<dbReference type="NCBIfam" id="NF009888">
    <property type="entry name" value="PRK13348.1"/>
    <property type="match status" value="1"/>
</dbReference>
<dbReference type="PANTHER" id="PTHR30579:SF2">
    <property type="entry name" value="HTH-TYPE TRANSCRIPTIONAL REGULATOR ARGP"/>
    <property type="match status" value="1"/>
</dbReference>
<dbReference type="PANTHER" id="PTHR30579">
    <property type="entry name" value="TRANSCRIPTIONAL REGULATOR"/>
    <property type="match status" value="1"/>
</dbReference>
<dbReference type="Pfam" id="PF00126">
    <property type="entry name" value="HTH_1"/>
    <property type="match status" value="1"/>
</dbReference>
<dbReference type="Pfam" id="PF03466">
    <property type="entry name" value="LysR_substrate"/>
    <property type="match status" value="1"/>
</dbReference>
<dbReference type="PRINTS" id="PR00039">
    <property type="entry name" value="HTHLYSR"/>
</dbReference>
<dbReference type="SUPFAM" id="SSF53850">
    <property type="entry name" value="Periplasmic binding protein-like II"/>
    <property type="match status" value="1"/>
</dbReference>
<dbReference type="SUPFAM" id="SSF46785">
    <property type="entry name" value="Winged helix' DNA-binding domain"/>
    <property type="match status" value="1"/>
</dbReference>
<dbReference type="PROSITE" id="PS50931">
    <property type="entry name" value="HTH_LYSR"/>
    <property type="match status" value="1"/>
</dbReference>
<feature type="chain" id="PRO_0000258619" description="HTH-type transcriptional regulator ArgP">
    <location>
        <begin position="1"/>
        <end position="302"/>
    </location>
</feature>
<feature type="domain" description="HTH lysR-type" evidence="1">
    <location>
        <begin position="4"/>
        <end position="60"/>
    </location>
</feature>
<feature type="DNA-binding region" description="H-T-H motif" evidence="1">
    <location>
        <begin position="21"/>
        <end position="40"/>
    </location>
</feature>
<organism>
    <name type="scientific">Yersinia pestis bv. Antiqua (strain Nepal516)</name>
    <dbReference type="NCBI Taxonomy" id="377628"/>
    <lineage>
        <taxon>Bacteria</taxon>
        <taxon>Pseudomonadati</taxon>
        <taxon>Pseudomonadota</taxon>
        <taxon>Gammaproteobacteria</taxon>
        <taxon>Enterobacterales</taxon>
        <taxon>Yersiniaceae</taxon>
        <taxon>Yersinia</taxon>
    </lineage>
</organism>
<protein>
    <recommendedName>
        <fullName evidence="1">HTH-type transcriptional regulator ArgP</fullName>
    </recommendedName>
</protein>
<comment type="function">
    <text evidence="1">Controls the transcription of genes involved in arginine and lysine metabolism.</text>
</comment>
<comment type="subunit">
    <text evidence="1">Homodimer.</text>
</comment>
<comment type="similarity">
    <text evidence="2">Belongs to the LysR transcriptional regulatory family.</text>
</comment>
<name>ARGP_YERPN</name>
<proteinExistence type="inferred from homology"/>
<reference key="1">
    <citation type="journal article" date="2006" name="J. Bacteriol.">
        <title>Complete genome sequence of Yersinia pestis strains Antiqua and Nepal516: evidence of gene reduction in an emerging pathogen.</title>
        <authorList>
            <person name="Chain P.S.G."/>
            <person name="Hu P."/>
            <person name="Malfatti S.A."/>
            <person name="Radnedge L."/>
            <person name="Larimer F."/>
            <person name="Vergez L.M."/>
            <person name="Worsham P."/>
            <person name="Chu M.C."/>
            <person name="Andersen G.L."/>
        </authorList>
    </citation>
    <scope>NUCLEOTIDE SEQUENCE [LARGE SCALE GENOMIC DNA]</scope>
    <source>
        <strain>Nepal516</strain>
    </source>
</reference>
<reference key="2">
    <citation type="submission" date="2009-04" db="EMBL/GenBank/DDBJ databases">
        <title>Yersinia pestis Nepal516A whole genome shotgun sequencing project.</title>
        <authorList>
            <person name="Plunkett G. III"/>
            <person name="Anderson B.D."/>
            <person name="Baumler D.J."/>
            <person name="Burland V."/>
            <person name="Cabot E.L."/>
            <person name="Glasner J.D."/>
            <person name="Mau B."/>
            <person name="Neeno-Eckwall E."/>
            <person name="Perna N.T."/>
            <person name="Munk A.C."/>
            <person name="Tapia R."/>
            <person name="Green L.D."/>
            <person name="Rogers Y.C."/>
            <person name="Detter J.C."/>
            <person name="Bruce D.C."/>
            <person name="Brettin T.S."/>
        </authorList>
    </citation>
    <scope>NUCLEOTIDE SEQUENCE [LARGE SCALE GENOMIC DNA]</scope>
    <source>
        <strain>Nepal516</strain>
    </source>
</reference>
<keyword id="KW-0238">DNA-binding</keyword>
<keyword id="KW-0804">Transcription</keyword>
<keyword id="KW-0805">Transcription regulation</keyword>
<evidence type="ECO:0000255" key="1">
    <source>
        <dbReference type="HAMAP-Rule" id="MF_00513"/>
    </source>
</evidence>
<evidence type="ECO:0000305" key="2"/>